<sequence>MSLQRFLQRQGSNGNLEYCADSAYGSYSVLTGQLTMEDNRRIQVLADTVATLPRGRKQLALARSSSLGDFSWSQRKVVTVEKQDNGTFGFEIQTYRLQNQNICSSEVCTMICKVQEDSPAHCAGLQVGDIFANVNGVSTEGFTHKQVVDLIRSSGNLLTIETLNGTMIHRRAELEAKLQTLKQTLKKKWVELRSLHLQEQRLLHGDTANSPNLENMDLDESSLFGNLLGPSPALLDRHRLSSESSCKSWLSSLTVDSEDGYRSSMSEDSIRGAFSRQTSTDDECFHSKDGDEILRNASSRRNRSISVTSSGSFSPLWESNYSSVFGTLPRKSRRGSVRKQILKFIPGLHRAVEEEESRF</sequence>
<proteinExistence type="evidence at protein level"/>
<reference key="1">
    <citation type="journal article" date="2005" name="Science">
        <title>The transcriptional landscape of the mammalian genome.</title>
        <authorList>
            <person name="Carninci P."/>
            <person name="Kasukawa T."/>
            <person name="Katayama S."/>
            <person name="Gough J."/>
            <person name="Frith M.C."/>
            <person name="Maeda N."/>
            <person name="Oyama R."/>
            <person name="Ravasi T."/>
            <person name="Lenhard B."/>
            <person name="Wells C."/>
            <person name="Kodzius R."/>
            <person name="Shimokawa K."/>
            <person name="Bajic V.B."/>
            <person name="Brenner S.E."/>
            <person name="Batalov S."/>
            <person name="Forrest A.R."/>
            <person name="Zavolan M."/>
            <person name="Davis M.J."/>
            <person name="Wilming L.G."/>
            <person name="Aidinis V."/>
            <person name="Allen J.E."/>
            <person name="Ambesi-Impiombato A."/>
            <person name="Apweiler R."/>
            <person name="Aturaliya R.N."/>
            <person name="Bailey T.L."/>
            <person name="Bansal M."/>
            <person name="Baxter L."/>
            <person name="Beisel K.W."/>
            <person name="Bersano T."/>
            <person name="Bono H."/>
            <person name="Chalk A.M."/>
            <person name="Chiu K.P."/>
            <person name="Choudhary V."/>
            <person name="Christoffels A."/>
            <person name="Clutterbuck D.R."/>
            <person name="Crowe M.L."/>
            <person name="Dalla E."/>
            <person name="Dalrymple B.P."/>
            <person name="de Bono B."/>
            <person name="Della Gatta G."/>
            <person name="di Bernardo D."/>
            <person name="Down T."/>
            <person name="Engstrom P."/>
            <person name="Fagiolini M."/>
            <person name="Faulkner G."/>
            <person name="Fletcher C.F."/>
            <person name="Fukushima T."/>
            <person name="Furuno M."/>
            <person name="Futaki S."/>
            <person name="Gariboldi M."/>
            <person name="Georgii-Hemming P."/>
            <person name="Gingeras T.R."/>
            <person name="Gojobori T."/>
            <person name="Green R.E."/>
            <person name="Gustincich S."/>
            <person name="Harbers M."/>
            <person name="Hayashi Y."/>
            <person name="Hensch T.K."/>
            <person name="Hirokawa N."/>
            <person name="Hill D."/>
            <person name="Huminiecki L."/>
            <person name="Iacono M."/>
            <person name="Ikeo K."/>
            <person name="Iwama A."/>
            <person name="Ishikawa T."/>
            <person name="Jakt M."/>
            <person name="Kanapin A."/>
            <person name="Katoh M."/>
            <person name="Kawasawa Y."/>
            <person name="Kelso J."/>
            <person name="Kitamura H."/>
            <person name="Kitano H."/>
            <person name="Kollias G."/>
            <person name="Krishnan S.P."/>
            <person name="Kruger A."/>
            <person name="Kummerfeld S.K."/>
            <person name="Kurochkin I.V."/>
            <person name="Lareau L.F."/>
            <person name="Lazarevic D."/>
            <person name="Lipovich L."/>
            <person name="Liu J."/>
            <person name="Liuni S."/>
            <person name="McWilliam S."/>
            <person name="Madan Babu M."/>
            <person name="Madera M."/>
            <person name="Marchionni L."/>
            <person name="Matsuda H."/>
            <person name="Matsuzawa S."/>
            <person name="Miki H."/>
            <person name="Mignone F."/>
            <person name="Miyake S."/>
            <person name="Morris K."/>
            <person name="Mottagui-Tabar S."/>
            <person name="Mulder N."/>
            <person name="Nakano N."/>
            <person name="Nakauchi H."/>
            <person name="Ng P."/>
            <person name="Nilsson R."/>
            <person name="Nishiguchi S."/>
            <person name="Nishikawa S."/>
            <person name="Nori F."/>
            <person name="Ohara O."/>
            <person name="Okazaki Y."/>
            <person name="Orlando V."/>
            <person name="Pang K.C."/>
            <person name="Pavan W.J."/>
            <person name="Pavesi G."/>
            <person name="Pesole G."/>
            <person name="Petrovsky N."/>
            <person name="Piazza S."/>
            <person name="Reed J."/>
            <person name="Reid J.F."/>
            <person name="Ring B.Z."/>
            <person name="Ringwald M."/>
            <person name="Rost B."/>
            <person name="Ruan Y."/>
            <person name="Salzberg S.L."/>
            <person name="Sandelin A."/>
            <person name="Schneider C."/>
            <person name="Schoenbach C."/>
            <person name="Sekiguchi K."/>
            <person name="Semple C.A."/>
            <person name="Seno S."/>
            <person name="Sessa L."/>
            <person name="Sheng Y."/>
            <person name="Shibata Y."/>
            <person name="Shimada H."/>
            <person name="Shimada K."/>
            <person name="Silva D."/>
            <person name="Sinclair B."/>
            <person name="Sperling S."/>
            <person name="Stupka E."/>
            <person name="Sugiura K."/>
            <person name="Sultana R."/>
            <person name="Takenaka Y."/>
            <person name="Taki K."/>
            <person name="Tammoja K."/>
            <person name="Tan S.L."/>
            <person name="Tang S."/>
            <person name="Taylor M.S."/>
            <person name="Tegner J."/>
            <person name="Teichmann S.A."/>
            <person name="Ueda H.R."/>
            <person name="van Nimwegen E."/>
            <person name="Verardo R."/>
            <person name="Wei C.L."/>
            <person name="Yagi K."/>
            <person name="Yamanishi H."/>
            <person name="Zabarovsky E."/>
            <person name="Zhu S."/>
            <person name="Zimmer A."/>
            <person name="Hide W."/>
            <person name="Bult C."/>
            <person name="Grimmond S.M."/>
            <person name="Teasdale R.D."/>
            <person name="Liu E.T."/>
            <person name="Brusic V."/>
            <person name="Quackenbush J."/>
            <person name="Wahlestedt C."/>
            <person name="Mattick J.S."/>
            <person name="Hume D.A."/>
            <person name="Kai C."/>
            <person name="Sasaki D."/>
            <person name="Tomaru Y."/>
            <person name="Fukuda S."/>
            <person name="Kanamori-Katayama M."/>
            <person name="Suzuki M."/>
            <person name="Aoki J."/>
            <person name="Arakawa T."/>
            <person name="Iida J."/>
            <person name="Imamura K."/>
            <person name="Itoh M."/>
            <person name="Kato T."/>
            <person name="Kawaji H."/>
            <person name="Kawagashira N."/>
            <person name="Kawashima T."/>
            <person name="Kojima M."/>
            <person name="Kondo S."/>
            <person name="Konno H."/>
            <person name="Nakano K."/>
            <person name="Ninomiya N."/>
            <person name="Nishio T."/>
            <person name="Okada M."/>
            <person name="Plessy C."/>
            <person name="Shibata K."/>
            <person name="Shiraki T."/>
            <person name="Suzuki S."/>
            <person name="Tagami M."/>
            <person name="Waki K."/>
            <person name="Watahiki A."/>
            <person name="Okamura-Oho Y."/>
            <person name="Suzuki H."/>
            <person name="Kawai J."/>
            <person name="Hayashizaki Y."/>
        </authorList>
    </citation>
    <scope>NUCLEOTIDE SEQUENCE [LARGE SCALE MRNA]</scope>
    <source>
        <strain>C57BL/6J</strain>
        <strain>NOD</strain>
        <tissue>Bone marrow</tissue>
        <tissue>Spleen</tissue>
        <tissue>Thymus</tissue>
    </source>
</reference>
<reference key="2">
    <citation type="journal article" date="2009" name="PLoS Biol.">
        <title>Lineage-specific biology revealed by a finished genome assembly of the mouse.</title>
        <authorList>
            <person name="Church D.M."/>
            <person name="Goodstadt L."/>
            <person name="Hillier L.W."/>
            <person name="Zody M.C."/>
            <person name="Goldstein S."/>
            <person name="She X."/>
            <person name="Bult C.J."/>
            <person name="Agarwala R."/>
            <person name="Cherry J.L."/>
            <person name="DiCuccio M."/>
            <person name="Hlavina W."/>
            <person name="Kapustin Y."/>
            <person name="Meric P."/>
            <person name="Maglott D."/>
            <person name="Birtle Z."/>
            <person name="Marques A.C."/>
            <person name="Graves T."/>
            <person name="Zhou S."/>
            <person name="Teague B."/>
            <person name="Potamousis K."/>
            <person name="Churas C."/>
            <person name="Place M."/>
            <person name="Herschleb J."/>
            <person name="Runnheim R."/>
            <person name="Forrest D."/>
            <person name="Amos-Landgraf J."/>
            <person name="Schwartz D.C."/>
            <person name="Cheng Z."/>
            <person name="Lindblad-Toh K."/>
            <person name="Eichler E.E."/>
            <person name="Ponting C.P."/>
        </authorList>
    </citation>
    <scope>NUCLEOTIDE SEQUENCE [LARGE SCALE GENOMIC DNA]</scope>
    <source>
        <strain>C57BL/6J</strain>
    </source>
</reference>
<reference key="3">
    <citation type="journal article" date="2004" name="Genome Res.">
        <title>The status, quality, and expansion of the NIH full-length cDNA project: the Mammalian Gene Collection (MGC).</title>
        <authorList>
            <consortium name="The MGC Project Team"/>
        </authorList>
    </citation>
    <scope>NUCLEOTIDE SEQUENCE [LARGE SCALE MRNA]</scope>
    <source>
        <strain>FVB/N</strain>
        <tissue>Mammary tumor</tissue>
    </source>
</reference>
<reference key="4">
    <citation type="journal article" date="2002" name="J. Neurosci.">
        <title>Tamalin, a PDZ domain-containing protein, links a protein complex formation of group 1 metabotropic glutamate receptors and the guanine nucleotide exchange factor cytohesins.</title>
        <authorList>
            <person name="Kitano J."/>
            <person name="Kimura K."/>
            <person name="Yamazaki Y."/>
            <person name="Soda T."/>
            <person name="Shigemoto R."/>
            <person name="Nakajima Y."/>
            <person name="Nakanishi S."/>
        </authorList>
    </citation>
    <scope>NUCLEOTIDE SEQUENCE [MRNA] OF 1-36</scope>
</reference>
<reference key="5">
    <citation type="journal article" date="2003" name="Mol. Immunol.">
        <title>A set of genes selectively expressed in murine dendritic cells: utility of related cis-acting sequences for lentiviral gene transfer.</title>
        <authorList>
            <person name="Gorski K.S."/>
            <person name="Shin T."/>
            <person name="Crafton E."/>
            <person name="Otsuji M."/>
            <person name="Rattis F.M."/>
            <person name="Huang X."/>
            <person name="Kelleher E."/>
            <person name="Francisco L."/>
            <person name="Pardoll D."/>
            <person name="Tsuchiya H."/>
        </authorList>
    </citation>
    <scope>NUCLEOTIDE SEQUENCE [MRNA] OF 6-359</scope>
    <source>
        <tissue>Bone marrow</tissue>
    </source>
</reference>
<reference key="6">
    <citation type="journal article" date="2010" name="Cell">
        <title>A tissue-specific atlas of mouse protein phosphorylation and expression.</title>
        <authorList>
            <person name="Huttlin E.L."/>
            <person name="Jedrychowski M.P."/>
            <person name="Elias J.E."/>
            <person name="Goswami T."/>
            <person name="Rad R."/>
            <person name="Beausoleil S.A."/>
            <person name="Villen J."/>
            <person name="Haas W."/>
            <person name="Sowa M.E."/>
            <person name="Gygi S.P."/>
        </authorList>
    </citation>
    <scope>IDENTIFICATION BY MASS SPECTROMETRY [LARGE SCALE ANALYSIS]</scope>
    <source>
        <tissue>Lung</tissue>
        <tissue>Spleen</tissue>
    </source>
</reference>
<evidence type="ECO:0000250" key="1"/>
<evidence type="ECO:0000255" key="2"/>
<evidence type="ECO:0000255" key="3">
    <source>
        <dbReference type="PROSITE-ProRule" id="PRU00143"/>
    </source>
</evidence>
<evidence type="ECO:0000305" key="4"/>
<organism>
    <name type="scientific">Mus musculus</name>
    <name type="common">Mouse</name>
    <dbReference type="NCBI Taxonomy" id="10090"/>
    <lineage>
        <taxon>Eukaryota</taxon>
        <taxon>Metazoa</taxon>
        <taxon>Chordata</taxon>
        <taxon>Craniata</taxon>
        <taxon>Vertebrata</taxon>
        <taxon>Euteleostomi</taxon>
        <taxon>Mammalia</taxon>
        <taxon>Eutheria</taxon>
        <taxon>Euarchontoglires</taxon>
        <taxon>Glires</taxon>
        <taxon>Rodentia</taxon>
        <taxon>Myomorpha</taxon>
        <taxon>Muroidea</taxon>
        <taxon>Muridae</taxon>
        <taxon>Murinae</taxon>
        <taxon>Mus</taxon>
        <taxon>Mus</taxon>
    </lineage>
</organism>
<protein>
    <recommendedName>
        <fullName>Cytohesin-interacting protein</fullName>
    </recommendedName>
    <alternativeName>
        <fullName>Cytohesin-binding protein HE</fullName>
        <shortName>Cbp HE</shortName>
    </alternativeName>
    <alternativeName>
        <fullName>Pleckstrin homology Sec7 and coiled-coil domains-binding protein</fullName>
    </alternativeName>
</protein>
<dbReference type="EMBL" id="AK089364">
    <property type="protein sequence ID" value="BAC40855.1"/>
    <property type="molecule type" value="mRNA"/>
</dbReference>
<dbReference type="EMBL" id="AK152784">
    <property type="protein sequence ID" value="BAE31493.1"/>
    <property type="molecule type" value="mRNA"/>
</dbReference>
<dbReference type="EMBL" id="AK157859">
    <property type="protein sequence ID" value="BAE34237.1"/>
    <property type="molecule type" value="mRNA"/>
</dbReference>
<dbReference type="EMBL" id="AK169575">
    <property type="protein sequence ID" value="BAE41236.1"/>
    <property type="molecule type" value="mRNA"/>
</dbReference>
<dbReference type="EMBL" id="AK170544">
    <property type="protein sequence ID" value="BAE41869.1"/>
    <property type="molecule type" value="mRNA"/>
</dbReference>
<dbReference type="EMBL" id="AK171467">
    <property type="protein sequence ID" value="BAE42473.1"/>
    <property type="molecule type" value="mRNA"/>
</dbReference>
<dbReference type="EMBL" id="AK172071">
    <property type="protein sequence ID" value="BAE42810.1"/>
    <property type="molecule type" value="mRNA"/>
</dbReference>
<dbReference type="EMBL" id="AL928564">
    <property type="status" value="NOT_ANNOTATED_CDS"/>
    <property type="molecule type" value="Genomic_DNA"/>
</dbReference>
<dbReference type="EMBL" id="BC007144">
    <property type="protein sequence ID" value="AAH07144.1"/>
    <property type="molecule type" value="mRNA"/>
</dbReference>
<dbReference type="EMBL" id="AF374273">
    <property type="protein sequence ID" value="AAL87039.1"/>
    <property type="molecule type" value="mRNA"/>
</dbReference>
<dbReference type="EMBL" id="AF192525">
    <property type="protein sequence ID" value="AAF04842.1"/>
    <property type="molecule type" value="mRNA"/>
</dbReference>
<dbReference type="CCDS" id="CCDS16048.1"/>
<dbReference type="RefSeq" id="NP_631939.1">
    <property type="nucleotide sequence ID" value="NM_139200.4"/>
</dbReference>
<dbReference type="RefSeq" id="XP_006498075.1">
    <property type="nucleotide sequence ID" value="XM_006498012.5"/>
</dbReference>
<dbReference type="RefSeq" id="XP_006498076.1">
    <property type="nucleotide sequence ID" value="XM_006498013.3"/>
</dbReference>
<dbReference type="SMR" id="Q91VY6"/>
<dbReference type="FunCoup" id="Q91VY6">
    <property type="interactions" value="1804"/>
</dbReference>
<dbReference type="STRING" id="10090.ENSMUSP00000028175"/>
<dbReference type="iPTMnet" id="Q91VY6"/>
<dbReference type="PhosphoSitePlus" id="Q91VY6"/>
<dbReference type="jPOST" id="Q91VY6"/>
<dbReference type="PaxDb" id="10090-ENSMUSP00000028175"/>
<dbReference type="ProteomicsDB" id="279139"/>
<dbReference type="Antibodypedia" id="1992">
    <property type="antibodies" value="126 antibodies from 31 providers"/>
</dbReference>
<dbReference type="DNASU" id="227929"/>
<dbReference type="Ensembl" id="ENSMUST00000028175.7">
    <property type="protein sequence ID" value="ENSMUSP00000028175.7"/>
    <property type="gene ID" value="ENSMUSG00000026832.13"/>
</dbReference>
<dbReference type="GeneID" id="227929"/>
<dbReference type="KEGG" id="mmu:227929"/>
<dbReference type="UCSC" id="uc008jsi.1">
    <property type="organism name" value="mouse"/>
</dbReference>
<dbReference type="AGR" id="MGI:2183535"/>
<dbReference type="CTD" id="9595"/>
<dbReference type="MGI" id="MGI:2183535">
    <property type="gene designation" value="Cytip"/>
</dbReference>
<dbReference type="VEuPathDB" id="HostDB:ENSMUSG00000026832"/>
<dbReference type="eggNOG" id="KOG3528">
    <property type="taxonomic scope" value="Eukaryota"/>
</dbReference>
<dbReference type="GeneTree" id="ENSGT00530000063734"/>
<dbReference type="HOGENOM" id="CLU_058640_1_0_1"/>
<dbReference type="InParanoid" id="Q91VY6"/>
<dbReference type="OMA" id="SVRKHIF"/>
<dbReference type="OrthoDB" id="10041077at2759"/>
<dbReference type="PhylomeDB" id="Q91VY6"/>
<dbReference type="TreeFam" id="TF316315"/>
<dbReference type="BioGRID-ORCS" id="227929">
    <property type="hits" value="3 hits in 75 CRISPR screens"/>
</dbReference>
<dbReference type="ChiTaRS" id="Cytip">
    <property type="organism name" value="mouse"/>
</dbReference>
<dbReference type="PRO" id="PR:Q91VY6"/>
<dbReference type="Proteomes" id="UP000000589">
    <property type="component" value="Chromosome 2"/>
</dbReference>
<dbReference type="RNAct" id="Q91VY6">
    <property type="molecule type" value="protein"/>
</dbReference>
<dbReference type="Bgee" id="ENSMUSG00000026832">
    <property type="expression patterns" value="Expressed in peripheral lymph node and 112 other cell types or tissues"/>
</dbReference>
<dbReference type="GO" id="GO:0005938">
    <property type="term" value="C:cell cortex"/>
    <property type="evidence" value="ECO:0000266"/>
    <property type="project" value="MGI"/>
</dbReference>
<dbReference type="GO" id="GO:0005737">
    <property type="term" value="C:cytoplasm"/>
    <property type="evidence" value="ECO:0000266"/>
    <property type="project" value="MGI"/>
</dbReference>
<dbReference type="GO" id="GO:0005829">
    <property type="term" value="C:cytosol"/>
    <property type="evidence" value="ECO:0007669"/>
    <property type="project" value="Ensembl"/>
</dbReference>
<dbReference type="GO" id="GO:0005769">
    <property type="term" value="C:early endosome"/>
    <property type="evidence" value="ECO:0007669"/>
    <property type="project" value="UniProtKB-SubCell"/>
</dbReference>
<dbReference type="GO" id="GO:0005654">
    <property type="term" value="C:nucleoplasm"/>
    <property type="evidence" value="ECO:0007669"/>
    <property type="project" value="Ensembl"/>
</dbReference>
<dbReference type="GO" id="GO:0030155">
    <property type="term" value="P:regulation of cell adhesion"/>
    <property type="evidence" value="ECO:0000266"/>
    <property type="project" value="MGI"/>
</dbReference>
<dbReference type="CDD" id="cd06713">
    <property type="entry name" value="PDZ_tamalin_CYTIP-like"/>
    <property type="match status" value="1"/>
</dbReference>
<dbReference type="FunFam" id="2.30.42.10:FF:000165">
    <property type="entry name" value="Cytohesin-interacting protein isoform X1"/>
    <property type="match status" value="1"/>
</dbReference>
<dbReference type="Gene3D" id="2.30.42.10">
    <property type="match status" value="1"/>
</dbReference>
<dbReference type="InterPro" id="IPR052122">
    <property type="entry name" value="Intracell_Traff_Signaling_Reg"/>
</dbReference>
<dbReference type="InterPro" id="IPR001478">
    <property type="entry name" value="PDZ"/>
</dbReference>
<dbReference type="InterPro" id="IPR036034">
    <property type="entry name" value="PDZ_sf"/>
</dbReference>
<dbReference type="PANTHER" id="PTHR15963:SF1">
    <property type="entry name" value="CYTOHESIN-INTERACTING PROTEIN"/>
    <property type="match status" value="1"/>
</dbReference>
<dbReference type="PANTHER" id="PTHR15963">
    <property type="entry name" value="GENERAL RECEPTOR FOR PHOSPHOINOSITIDES 1-ASSOCIATED SCAFFOLD PROTEIN-RELATED"/>
    <property type="match status" value="1"/>
</dbReference>
<dbReference type="Pfam" id="PF00595">
    <property type="entry name" value="PDZ"/>
    <property type="match status" value="1"/>
</dbReference>
<dbReference type="SMART" id="SM00228">
    <property type="entry name" value="PDZ"/>
    <property type="match status" value="1"/>
</dbReference>
<dbReference type="SUPFAM" id="SSF50156">
    <property type="entry name" value="PDZ domain-like"/>
    <property type="match status" value="1"/>
</dbReference>
<dbReference type="PROSITE" id="PS50106">
    <property type="entry name" value="PDZ"/>
    <property type="match status" value="1"/>
</dbReference>
<gene>
    <name type="primary">Cytip</name>
    <name type="synonym">Pscdbp</name>
</gene>
<accession>Q91VY6</accession>
<accession>A2AS77</accession>
<accession>Q3TZH1</accession>
<accession>Q8R4T4</accession>
<accession>Q9QZA9</accession>
<keyword id="KW-0175">Coiled coil</keyword>
<keyword id="KW-0963">Cytoplasm</keyword>
<keyword id="KW-0967">Endosome</keyword>
<keyword id="KW-1185">Reference proteome</keyword>
<comment type="function">
    <text evidence="1">By its binding to cytohesin-1 (CYTH1), it modifies activation of ARFs by CYTH1 and its precise function may be to sequester CYTH1 in the cytoplasm.</text>
</comment>
<comment type="subunit">
    <text evidence="1">Interacts with CYTH1 and SNX27.</text>
</comment>
<comment type="subcellular location">
    <subcellularLocation>
        <location evidence="1">Cytoplasm</location>
    </subcellularLocation>
    <subcellularLocation>
        <location evidence="1">Early endosome</location>
    </subcellularLocation>
    <text evidence="1">Recruited from the cytosol to endosomes by SNX27.</text>
</comment>
<feature type="chain" id="PRO_0000097062" description="Cytohesin-interacting protein">
    <location>
        <begin position="1"/>
        <end position="359"/>
    </location>
</feature>
<feature type="domain" description="PDZ" evidence="3">
    <location>
        <begin position="77"/>
        <end position="166"/>
    </location>
</feature>
<feature type="region of interest" description="Interaction with CYTH1" evidence="1">
    <location>
        <begin position="166"/>
        <end position="188"/>
    </location>
</feature>
<feature type="coiled-coil region" evidence="2">
    <location>
        <begin position="165"/>
        <end position="188"/>
    </location>
</feature>
<feature type="sequence conflict" description="In Ref. 5; AAF04842." evidence="4" ref="5">
    <original>F</original>
    <variation>Q</variation>
    <location>
        <position position="6"/>
    </location>
</feature>
<name>CYTIP_MOUSE</name>